<gene>
    <name type="ordered locus">CLB_0043</name>
</gene>
<comment type="function">
    <text evidence="1">Binds to DNA and alters its conformation. May be involved in regulation of gene expression, nucleoid organization and DNA protection.</text>
</comment>
<comment type="subunit">
    <text evidence="1">Homodimer.</text>
</comment>
<comment type="subcellular location">
    <subcellularLocation>
        <location evidence="1">Cytoplasm</location>
        <location evidence="1">Nucleoid</location>
    </subcellularLocation>
</comment>
<comment type="similarity">
    <text evidence="1">Belongs to the YbaB/EbfC family.</text>
</comment>
<accession>A7FQ66</accession>
<protein>
    <recommendedName>
        <fullName evidence="1">Nucleoid-associated protein CLB_0043</fullName>
    </recommendedName>
</protein>
<dbReference type="EMBL" id="CP000726">
    <property type="protein sequence ID" value="ABS35572.1"/>
    <property type="molecule type" value="Genomic_DNA"/>
</dbReference>
<dbReference type="RefSeq" id="WP_003359499.1">
    <property type="nucleotide sequence ID" value="NC_009697.1"/>
</dbReference>
<dbReference type="SMR" id="A7FQ66"/>
<dbReference type="KEGG" id="cba:CLB_0043"/>
<dbReference type="HOGENOM" id="CLU_140930_1_0_9"/>
<dbReference type="GO" id="GO:0043590">
    <property type="term" value="C:bacterial nucleoid"/>
    <property type="evidence" value="ECO:0007669"/>
    <property type="project" value="UniProtKB-UniRule"/>
</dbReference>
<dbReference type="GO" id="GO:0005829">
    <property type="term" value="C:cytosol"/>
    <property type="evidence" value="ECO:0007669"/>
    <property type="project" value="TreeGrafter"/>
</dbReference>
<dbReference type="GO" id="GO:0003677">
    <property type="term" value="F:DNA binding"/>
    <property type="evidence" value="ECO:0007669"/>
    <property type="project" value="UniProtKB-UniRule"/>
</dbReference>
<dbReference type="FunFam" id="3.30.1310.10:FF:000002">
    <property type="entry name" value="Nucleoid-associated protein IKC_06587"/>
    <property type="match status" value="1"/>
</dbReference>
<dbReference type="Gene3D" id="3.30.1310.10">
    <property type="entry name" value="Nucleoid-associated protein YbaB-like domain"/>
    <property type="match status" value="1"/>
</dbReference>
<dbReference type="HAMAP" id="MF_00274">
    <property type="entry name" value="DNA_YbaB_EbfC"/>
    <property type="match status" value="1"/>
</dbReference>
<dbReference type="InterPro" id="IPR036894">
    <property type="entry name" value="YbaB-like_sf"/>
</dbReference>
<dbReference type="InterPro" id="IPR004401">
    <property type="entry name" value="YbaB/EbfC"/>
</dbReference>
<dbReference type="NCBIfam" id="TIGR00103">
    <property type="entry name" value="DNA_YbaB_EbfC"/>
    <property type="match status" value="1"/>
</dbReference>
<dbReference type="PANTHER" id="PTHR33449">
    <property type="entry name" value="NUCLEOID-ASSOCIATED PROTEIN YBAB"/>
    <property type="match status" value="1"/>
</dbReference>
<dbReference type="PANTHER" id="PTHR33449:SF1">
    <property type="entry name" value="NUCLEOID-ASSOCIATED PROTEIN YBAB"/>
    <property type="match status" value="1"/>
</dbReference>
<dbReference type="Pfam" id="PF02575">
    <property type="entry name" value="YbaB_DNA_bd"/>
    <property type="match status" value="1"/>
</dbReference>
<dbReference type="PIRSF" id="PIRSF004555">
    <property type="entry name" value="UCP004555"/>
    <property type="match status" value="1"/>
</dbReference>
<dbReference type="SUPFAM" id="SSF82607">
    <property type="entry name" value="YbaB-like"/>
    <property type="match status" value="1"/>
</dbReference>
<reference key="1">
    <citation type="journal article" date="2007" name="PLoS ONE">
        <title>Analysis of the neurotoxin complex genes in Clostridium botulinum A1-A4 and B1 strains: BoNT/A3, /Ba4 and /B1 clusters are located within plasmids.</title>
        <authorList>
            <person name="Smith T.J."/>
            <person name="Hill K.K."/>
            <person name="Foley B.T."/>
            <person name="Detter J.C."/>
            <person name="Munk A.C."/>
            <person name="Bruce D.C."/>
            <person name="Doggett N.A."/>
            <person name="Smith L.A."/>
            <person name="Marks J.D."/>
            <person name="Xie G."/>
            <person name="Brettin T.S."/>
        </authorList>
    </citation>
    <scope>NUCLEOTIDE SEQUENCE [LARGE SCALE GENOMIC DNA]</scope>
    <source>
        <strain>ATCC 19397 / Type A</strain>
    </source>
</reference>
<proteinExistence type="inferred from homology"/>
<sequence length="113" mass="12271">MARGGFPNMGGANMNNLMKQAQKLQQDMEKMQGEMEKKEFSATVGGGAVTAVANGKKQIVDIKIEPEVVDEDDIEMLEDLIMSACNEALKKAEEDTSSEVKRLTGGMNLPGMF</sequence>
<organism>
    <name type="scientific">Clostridium botulinum (strain ATCC 19397 / Type A)</name>
    <dbReference type="NCBI Taxonomy" id="441770"/>
    <lineage>
        <taxon>Bacteria</taxon>
        <taxon>Bacillati</taxon>
        <taxon>Bacillota</taxon>
        <taxon>Clostridia</taxon>
        <taxon>Eubacteriales</taxon>
        <taxon>Clostridiaceae</taxon>
        <taxon>Clostridium</taxon>
    </lineage>
</organism>
<evidence type="ECO:0000255" key="1">
    <source>
        <dbReference type="HAMAP-Rule" id="MF_00274"/>
    </source>
</evidence>
<evidence type="ECO:0000256" key="2">
    <source>
        <dbReference type="SAM" id="MobiDB-lite"/>
    </source>
</evidence>
<feature type="chain" id="PRO_1000003726" description="Nucleoid-associated protein CLB_0043">
    <location>
        <begin position="1"/>
        <end position="113"/>
    </location>
</feature>
<feature type="region of interest" description="Disordered" evidence="2">
    <location>
        <begin position="93"/>
        <end position="113"/>
    </location>
</feature>
<feature type="compositionally biased region" description="Basic and acidic residues" evidence="2">
    <location>
        <begin position="93"/>
        <end position="102"/>
    </location>
</feature>
<name>Y043_CLOB1</name>
<keyword id="KW-0963">Cytoplasm</keyword>
<keyword id="KW-0238">DNA-binding</keyword>